<evidence type="ECO:0000255" key="1">
    <source>
        <dbReference type="HAMAP-Rule" id="MF_00200"/>
    </source>
</evidence>
<keyword id="KW-0067">ATP-binding</keyword>
<keyword id="KW-0963">Cytoplasm</keyword>
<keyword id="KW-0436">Ligase</keyword>
<keyword id="KW-0547">Nucleotide-binding</keyword>
<reference key="1">
    <citation type="journal article" date="2009" name="J. Bacteriol.">
        <title>Complete genome sequence of the anaerobic, protein-degrading hyperthermophilic crenarchaeon Desulfurococcus kamchatkensis.</title>
        <authorList>
            <person name="Ravin N.V."/>
            <person name="Mardanov A.V."/>
            <person name="Beletsky A.V."/>
            <person name="Kublanov I.V."/>
            <person name="Kolganova T.V."/>
            <person name="Lebedinsky A.V."/>
            <person name="Chernyh N.A."/>
            <person name="Bonch-Osmolovskaya E.A."/>
            <person name="Skryabin K.G."/>
        </authorList>
    </citation>
    <scope>NUCLEOTIDE SEQUENCE [LARGE SCALE GENOMIC DNA]</scope>
    <source>
        <strain>DSM 18924 / JCM 16383 / VKM B-2413 / 1221n</strain>
    </source>
</reference>
<name>RTCA_DESA1</name>
<accession>B8D680</accession>
<sequence>MSILEIDGSIGEGGGQILRYALALSALTLKPIRVYNIRAKRDNPGLRPQHLTAVEVLKEVTGAEVENAKVGSMEILFKPTSRRSGEMEIDIGTAGSISLVLQAMLPVLLFAEGDSRARLKGGTNVPWSPPIDYIKHVFLYNISHMGVRANIEVVRRGHYPRGGGLVNVEVKRVEEALKPLMIVRRGRIRGFRIHSHCVKLPAHVAVRQCESARRILSGIFKEKITEEIETYPPDKDPHLGPGSGILIYVEAEPGIRLGSDSLGEKGKPAERVGEEAALILIEELETGMAFDRHMGDMLIPYLFLAKGTSRIGVSMITLHLLTAIEVGKLFFPEAKVEVDGELGKPGIITIQGVGYKP</sequence>
<organism>
    <name type="scientific">Desulfurococcus amylolyticus (strain DSM 18924 / JCM 16383 / VKM B-2413 / 1221n)</name>
    <name type="common">Desulfurococcus kamchatkensis</name>
    <dbReference type="NCBI Taxonomy" id="490899"/>
    <lineage>
        <taxon>Archaea</taxon>
        <taxon>Thermoproteota</taxon>
        <taxon>Thermoprotei</taxon>
        <taxon>Desulfurococcales</taxon>
        <taxon>Desulfurococcaceae</taxon>
        <taxon>Desulfurococcus</taxon>
    </lineage>
</organism>
<dbReference type="EC" id="6.5.1.4" evidence="1"/>
<dbReference type="EMBL" id="CP001140">
    <property type="protein sequence ID" value="ACL11611.1"/>
    <property type="molecule type" value="Genomic_DNA"/>
</dbReference>
<dbReference type="RefSeq" id="WP_012608952.1">
    <property type="nucleotide sequence ID" value="NC_011766.1"/>
</dbReference>
<dbReference type="SMR" id="B8D680"/>
<dbReference type="STRING" id="490899.DKAM_1285"/>
<dbReference type="GeneID" id="7171844"/>
<dbReference type="KEGG" id="dka:DKAM_1285"/>
<dbReference type="eggNOG" id="arCOG04125">
    <property type="taxonomic scope" value="Archaea"/>
</dbReference>
<dbReference type="HOGENOM" id="CLU_027882_0_0_2"/>
<dbReference type="Proteomes" id="UP000006903">
    <property type="component" value="Chromosome"/>
</dbReference>
<dbReference type="GO" id="GO:0005737">
    <property type="term" value="C:cytoplasm"/>
    <property type="evidence" value="ECO:0007669"/>
    <property type="project" value="UniProtKB-SubCell"/>
</dbReference>
<dbReference type="GO" id="GO:0005524">
    <property type="term" value="F:ATP binding"/>
    <property type="evidence" value="ECO:0007669"/>
    <property type="project" value="UniProtKB-KW"/>
</dbReference>
<dbReference type="GO" id="GO:0003963">
    <property type="term" value="F:RNA-3'-phosphate cyclase activity"/>
    <property type="evidence" value="ECO:0007669"/>
    <property type="project" value="UniProtKB-UniRule"/>
</dbReference>
<dbReference type="GO" id="GO:0006396">
    <property type="term" value="P:RNA processing"/>
    <property type="evidence" value="ECO:0007669"/>
    <property type="project" value="InterPro"/>
</dbReference>
<dbReference type="CDD" id="cd00874">
    <property type="entry name" value="RNA_Cyclase_Class_II"/>
    <property type="match status" value="1"/>
</dbReference>
<dbReference type="Gene3D" id="3.65.10.20">
    <property type="entry name" value="RNA 3'-terminal phosphate cyclase domain"/>
    <property type="match status" value="1"/>
</dbReference>
<dbReference type="Gene3D" id="3.30.360.20">
    <property type="entry name" value="RNA 3'-terminal phosphate cyclase, insert domain"/>
    <property type="match status" value="1"/>
</dbReference>
<dbReference type="HAMAP" id="MF_00200">
    <property type="entry name" value="RTC"/>
    <property type="match status" value="1"/>
</dbReference>
<dbReference type="InterPro" id="IPR013791">
    <property type="entry name" value="RNA3'-term_phos_cycl_insert"/>
</dbReference>
<dbReference type="InterPro" id="IPR023797">
    <property type="entry name" value="RNA3'_phos_cyclase_dom"/>
</dbReference>
<dbReference type="InterPro" id="IPR037136">
    <property type="entry name" value="RNA3'_phos_cyclase_dom_sf"/>
</dbReference>
<dbReference type="InterPro" id="IPR000228">
    <property type="entry name" value="RNA3'_term_phos_cyc"/>
</dbReference>
<dbReference type="InterPro" id="IPR017770">
    <property type="entry name" value="RNA3'_term_phos_cyc_type_1"/>
</dbReference>
<dbReference type="InterPro" id="IPR020719">
    <property type="entry name" value="RNA3'_term_phos_cycl-like_CS"/>
</dbReference>
<dbReference type="InterPro" id="IPR013792">
    <property type="entry name" value="RNA3'P_cycl/enolpyr_Trfase_a/b"/>
</dbReference>
<dbReference type="InterPro" id="IPR036553">
    <property type="entry name" value="RPTC_insert"/>
</dbReference>
<dbReference type="NCBIfam" id="TIGR03399">
    <property type="entry name" value="RNA_3prim_cycl"/>
    <property type="match status" value="1"/>
</dbReference>
<dbReference type="PANTHER" id="PTHR11096">
    <property type="entry name" value="RNA 3' TERMINAL PHOSPHATE CYCLASE"/>
    <property type="match status" value="1"/>
</dbReference>
<dbReference type="PANTHER" id="PTHR11096:SF0">
    <property type="entry name" value="RNA 3'-TERMINAL PHOSPHATE CYCLASE"/>
    <property type="match status" value="1"/>
</dbReference>
<dbReference type="Pfam" id="PF01137">
    <property type="entry name" value="RTC"/>
    <property type="match status" value="1"/>
</dbReference>
<dbReference type="Pfam" id="PF05189">
    <property type="entry name" value="RTC_insert"/>
    <property type="match status" value="1"/>
</dbReference>
<dbReference type="PIRSF" id="PIRSF005378">
    <property type="entry name" value="RNA3'_term_phos_cycl_euk"/>
    <property type="match status" value="1"/>
</dbReference>
<dbReference type="SUPFAM" id="SSF55205">
    <property type="entry name" value="EPT/RTPC-like"/>
    <property type="match status" value="1"/>
</dbReference>
<dbReference type="SUPFAM" id="SSF52913">
    <property type="entry name" value="RNA 3'-terminal phosphate cyclase, RPTC, insert domain"/>
    <property type="match status" value="1"/>
</dbReference>
<dbReference type="PROSITE" id="PS01287">
    <property type="entry name" value="RTC"/>
    <property type="match status" value="1"/>
</dbReference>
<gene>
    <name evidence="1" type="primary">rtcA</name>
    <name type="ordered locus">DKAM_1285</name>
</gene>
<protein>
    <recommendedName>
        <fullName evidence="1">RNA 3'-terminal phosphate cyclase</fullName>
        <shortName evidence="1">RNA cyclase</shortName>
        <shortName evidence="1">RNA-3'-phosphate cyclase</shortName>
        <ecNumber evidence="1">6.5.1.4</ecNumber>
    </recommendedName>
</protein>
<feature type="chain" id="PRO_1000195104" description="RNA 3'-terminal phosphate cyclase">
    <location>
        <begin position="1"/>
        <end position="357"/>
    </location>
</feature>
<feature type="active site" description="Tele-AMP-histidine intermediate" evidence="1">
    <location>
        <position position="319"/>
    </location>
</feature>
<feature type="binding site" evidence="1">
    <location>
        <position position="102"/>
    </location>
    <ligand>
        <name>ATP</name>
        <dbReference type="ChEBI" id="CHEBI:30616"/>
    </ligand>
</feature>
<feature type="binding site" evidence="1">
    <location>
        <begin position="293"/>
        <end position="296"/>
    </location>
    <ligand>
        <name>ATP</name>
        <dbReference type="ChEBI" id="CHEBI:30616"/>
    </ligand>
</feature>
<proteinExistence type="inferred from homology"/>
<comment type="function">
    <text evidence="1">Catalyzes the conversion of 3'-phosphate to a 2',3'-cyclic phosphodiester at the end of RNA. The mechanism of action of the enzyme occurs in 3 steps: (A) adenylation of the enzyme by ATP; (B) transfer of adenylate to an RNA-N3'P to produce RNA-N3'PP5'A; (C) and attack of the adjacent 2'-hydroxyl on the 3'-phosphorus in the diester linkage to produce the cyclic end product. The biological role of this enzyme is unknown but it is likely to function in some aspects of cellular RNA processing.</text>
</comment>
<comment type="catalytic activity">
    <reaction evidence="1">
        <text>a 3'-end 3'-phospho-ribonucleotide-RNA + ATP = a 3'-end 2',3'-cyclophospho-ribonucleotide-RNA + AMP + diphosphate</text>
        <dbReference type="Rhea" id="RHEA:23976"/>
        <dbReference type="Rhea" id="RHEA-COMP:10463"/>
        <dbReference type="Rhea" id="RHEA-COMP:10464"/>
        <dbReference type="ChEBI" id="CHEBI:30616"/>
        <dbReference type="ChEBI" id="CHEBI:33019"/>
        <dbReference type="ChEBI" id="CHEBI:83062"/>
        <dbReference type="ChEBI" id="CHEBI:83064"/>
        <dbReference type="ChEBI" id="CHEBI:456215"/>
        <dbReference type="EC" id="6.5.1.4"/>
    </reaction>
</comment>
<comment type="subcellular location">
    <subcellularLocation>
        <location evidence="1">Cytoplasm</location>
    </subcellularLocation>
</comment>
<comment type="similarity">
    <text evidence="1">Belongs to the RNA 3'-terminal cyclase family. Type 1 subfamily.</text>
</comment>